<feature type="chain" id="PRO_0000236727" description="Tyrosine--tRNA ligase">
    <location>
        <begin position="1"/>
        <end position="401"/>
    </location>
</feature>
<feature type="domain" description="S4 RNA-binding" evidence="1">
    <location>
        <begin position="338"/>
        <end position="399"/>
    </location>
</feature>
<feature type="short sequence motif" description="'HIGH' region">
    <location>
        <begin position="43"/>
        <end position="52"/>
    </location>
</feature>
<feature type="short sequence motif" description="'KMSKS' region">
    <location>
        <begin position="227"/>
        <end position="231"/>
    </location>
</feature>
<feature type="binding site" evidence="1">
    <location>
        <position position="230"/>
    </location>
    <ligand>
        <name>ATP</name>
        <dbReference type="ChEBI" id="CHEBI:30616"/>
    </ligand>
</feature>
<protein>
    <recommendedName>
        <fullName evidence="1">Tyrosine--tRNA ligase</fullName>
        <ecNumber evidence="1">6.1.1.1</ecNumber>
    </recommendedName>
    <alternativeName>
        <fullName evidence="1">Tyrosyl-tRNA synthetase</fullName>
        <shortName evidence="1">TyrRS</shortName>
    </alternativeName>
</protein>
<dbReference type="EC" id="6.1.1.1" evidence="1"/>
<dbReference type="EMBL" id="AE017340">
    <property type="protein sequence ID" value="AAV83068.1"/>
    <property type="molecule type" value="Genomic_DNA"/>
</dbReference>
<dbReference type="RefSeq" id="WP_011235463.1">
    <property type="nucleotide sequence ID" value="NC_006512.1"/>
</dbReference>
<dbReference type="SMR" id="Q5QVP5"/>
<dbReference type="STRING" id="283942.IL2236"/>
<dbReference type="GeneID" id="41337425"/>
<dbReference type="KEGG" id="ilo:IL2236"/>
<dbReference type="eggNOG" id="COG0162">
    <property type="taxonomic scope" value="Bacteria"/>
</dbReference>
<dbReference type="HOGENOM" id="CLU_024003_5_0_6"/>
<dbReference type="OrthoDB" id="9804243at2"/>
<dbReference type="Proteomes" id="UP000001171">
    <property type="component" value="Chromosome"/>
</dbReference>
<dbReference type="GO" id="GO:0005829">
    <property type="term" value="C:cytosol"/>
    <property type="evidence" value="ECO:0007669"/>
    <property type="project" value="TreeGrafter"/>
</dbReference>
<dbReference type="GO" id="GO:0005524">
    <property type="term" value="F:ATP binding"/>
    <property type="evidence" value="ECO:0007669"/>
    <property type="project" value="UniProtKB-UniRule"/>
</dbReference>
<dbReference type="GO" id="GO:0003723">
    <property type="term" value="F:RNA binding"/>
    <property type="evidence" value="ECO:0007669"/>
    <property type="project" value="UniProtKB-KW"/>
</dbReference>
<dbReference type="GO" id="GO:0004831">
    <property type="term" value="F:tyrosine-tRNA ligase activity"/>
    <property type="evidence" value="ECO:0007669"/>
    <property type="project" value="UniProtKB-UniRule"/>
</dbReference>
<dbReference type="GO" id="GO:0006437">
    <property type="term" value="P:tyrosyl-tRNA aminoacylation"/>
    <property type="evidence" value="ECO:0007669"/>
    <property type="project" value="UniProtKB-UniRule"/>
</dbReference>
<dbReference type="CDD" id="cd00165">
    <property type="entry name" value="S4"/>
    <property type="match status" value="1"/>
</dbReference>
<dbReference type="CDD" id="cd00805">
    <property type="entry name" value="TyrRS_core"/>
    <property type="match status" value="1"/>
</dbReference>
<dbReference type="FunFam" id="1.10.240.10:FF:000006">
    <property type="entry name" value="Tyrosine--tRNA ligase"/>
    <property type="match status" value="1"/>
</dbReference>
<dbReference type="FunFam" id="3.10.290.10:FF:000022">
    <property type="entry name" value="Tyrosine--tRNA ligase"/>
    <property type="match status" value="1"/>
</dbReference>
<dbReference type="FunFam" id="3.40.50.620:FF:000061">
    <property type="entry name" value="Tyrosine--tRNA ligase"/>
    <property type="match status" value="1"/>
</dbReference>
<dbReference type="Gene3D" id="3.40.50.620">
    <property type="entry name" value="HUPs"/>
    <property type="match status" value="1"/>
</dbReference>
<dbReference type="Gene3D" id="3.10.290.10">
    <property type="entry name" value="RNA-binding S4 domain"/>
    <property type="match status" value="1"/>
</dbReference>
<dbReference type="Gene3D" id="1.10.240.10">
    <property type="entry name" value="Tyrosyl-Transfer RNA Synthetase"/>
    <property type="match status" value="1"/>
</dbReference>
<dbReference type="HAMAP" id="MF_02007">
    <property type="entry name" value="Tyr_tRNA_synth_type2"/>
    <property type="match status" value="1"/>
</dbReference>
<dbReference type="InterPro" id="IPR001412">
    <property type="entry name" value="aa-tRNA-synth_I_CS"/>
</dbReference>
<dbReference type="InterPro" id="IPR002305">
    <property type="entry name" value="aa-tRNA-synth_Ic"/>
</dbReference>
<dbReference type="InterPro" id="IPR014729">
    <property type="entry name" value="Rossmann-like_a/b/a_fold"/>
</dbReference>
<dbReference type="InterPro" id="IPR002942">
    <property type="entry name" value="S4_RNA-bd"/>
</dbReference>
<dbReference type="InterPro" id="IPR036986">
    <property type="entry name" value="S4_RNA-bd_sf"/>
</dbReference>
<dbReference type="InterPro" id="IPR002307">
    <property type="entry name" value="Tyr-tRNA-ligase"/>
</dbReference>
<dbReference type="InterPro" id="IPR024088">
    <property type="entry name" value="Tyr-tRNA-ligase_bac-type"/>
</dbReference>
<dbReference type="InterPro" id="IPR024108">
    <property type="entry name" value="Tyr-tRNA-ligase_bac_2"/>
</dbReference>
<dbReference type="NCBIfam" id="TIGR00234">
    <property type="entry name" value="tyrS"/>
    <property type="match status" value="1"/>
</dbReference>
<dbReference type="PANTHER" id="PTHR11766:SF1">
    <property type="entry name" value="TYROSINE--TRNA LIGASE"/>
    <property type="match status" value="1"/>
</dbReference>
<dbReference type="PANTHER" id="PTHR11766">
    <property type="entry name" value="TYROSYL-TRNA SYNTHETASE"/>
    <property type="match status" value="1"/>
</dbReference>
<dbReference type="Pfam" id="PF01479">
    <property type="entry name" value="S4"/>
    <property type="match status" value="1"/>
</dbReference>
<dbReference type="Pfam" id="PF00579">
    <property type="entry name" value="tRNA-synt_1b"/>
    <property type="match status" value="1"/>
</dbReference>
<dbReference type="PRINTS" id="PR01040">
    <property type="entry name" value="TRNASYNTHTYR"/>
</dbReference>
<dbReference type="SMART" id="SM00363">
    <property type="entry name" value="S4"/>
    <property type="match status" value="1"/>
</dbReference>
<dbReference type="SUPFAM" id="SSF55174">
    <property type="entry name" value="Alpha-L RNA-binding motif"/>
    <property type="match status" value="1"/>
</dbReference>
<dbReference type="SUPFAM" id="SSF52374">
    <property type="entry name" value="Nucleotidylyl transferase"/>
    <property type="match status" value="1"/>
</dbReference>
<dbReference type="PROSITE" id="PS00178">
    <property type="entry name" value="AA_TRNA_LIGASE_I"/>
    <property type="match status" value="1"/>
</dbReference>
<dbReference type="PROSITE" id="PS50889">
    <property type="entry name" value="S4"/>
    <property type="match status" value="1"/>
</dbReference>
<proteinExistence type="inferred from homology"/>
<accession>Q5QVP5</accession>
<reference key="1">
    <citation type="journal article" date="2004" name="Proc. Natl. Acad. Sci. U.S.A.">
        <title>Genome sequence of the deep-sea gamma-proteobacterium Idiomarina loihiensis reveals amino acid fermentation as a source of carbon and energy.</title>
        <authorList>
            <person name="Hou S."/>
            <person name="Saw J.H."/>
            <person name="Lee K.S."/>
            <person name="Freitas T.A."/>
            <person name="Belisle C."/>
            <person name="Kawarabayasi Y."/>
            <person name="Donachie S.P."/>
            <person name="Pikina A."/>
            <person name="Galperin M.Y."/>
            <person name="Koonin E.V."/>
            <person name="Makarova K.S."/>
            <person name="Omelchenko M.V."/>
            <person name="Sorokin A."/>
            <person name="Wolf Y.I."/>
            <person name="Li Q.X."/>
            <person name="Keum Y.S."/>
            <person name="Campbell S."/>
            <person name="Denery J."/>
            <person name="Aizawa S."/>
            <person name="Shibata S."/>
            <person name="Malahoff A."/>
            <person name="Alam M."/>
        </authorList>
    </citation>
    <scope>NUCLEOTIDE SEQUENCE [LARGE SCALE GENOMIC DNA]</scope>
    <source>
        <strain>ATCC BAA-735 / DSM 15497 / L2-TR</strain>
    </source>
</reference>
<organism>
    <name type="scientific">Idiomarina loihiensis (strain ATCC BAA-735 / DSM 15497 / L2-TR)</name>
    <dbReference type="NCBI Taxonomy" id="283942"/>
    <lineage>
        <taxon>Bacteria</taxon>
        <taxon>Pseudomonadati</taxon>
        <taxon>Pseudomonadota</taxon>
        <taxon>Gammaproteobacteria</taxon>
        <taxon>Alteromonadales</taxon>
        <taxon>Idiomarinaceae</taxon>
        <taxon>Idiomarina</taxon>
    </lineage>
</organism>
<keyword id="KW-0030">Aminoacyl-tRNA synthetase</keyword>
<keyword id="KW-0067">ATP-binding</keyword>
<keyword id="KW-0963">Cytoplasm</keyword>
<keyword id="KW-0436">Ligase</keyword>
<keyword id="KW-0547">Nucleotide-binding</keyword>
<keyword id="KW-0648">Protein biosynthesis</keyword>
<keyword id="KW-1185">Reference proteome</keyword>
<keyword id="KW-0694">RNA-binding</keyword>
<sequence>MKTEVAEAIAEITRGAEEVLLEQELAEKLASGKPLTVKAGFDPTAPDLHLGHTVLINKLRVFQDFGHKVVFLIGDFTGMIGDPTGKNVTRKPLTTEQVIANAETYKEQVFKILDPAKTEIRFNSEWMSKMGAADMIKLAARQTVARMLERDDFKKRYQNNQSIAIHEFLYPLVQGWDSVELKADVELGGTDQRFNLLMGRELQKEEGQRPQTVIMTPLLEGLDGVQKMSKSLNNYIGITEPANDMFGKIMSVSDELMWRYFQLLSFRSITEIDELKAAVADGKNPRDVKVLLAKEIIARFHSEDDAEKAEQDFIQRFQKNALPDDIPEKTVQVGAEGMAIGNVLKEAGLVESTSEALRMIKQNAVKVDGEKFSDSRYLCTEKDSGVYQVGKRRFAKINLTA</sequence>
<gene>
    <name evidence="1" type="primary">tyrS</name>
    <name type="ordered locus">IL2236</name>
</gene>
<evidence type="ECO:0000255" key="1">
    <source>
        <dbReference type="HAMAP-Rule" id="MF_02007"/>
    </source>
</evidence>
<comment type="function">
    <text evidence="1">Catalyzes the attachment of tyrosine to tRNA(Tyr) in a two-step reaction: tyrosine is first activated by ATP to form Tyr-AMP and then transferred to the acceptor end of tRNA(Tyr).</text>
</comment>
<comment type="catalytic activity">
    <reaction evidence="1">
        <text>tRNA(Tyr) + L-tyrosine + ATP = L-tyrosyl-tRNA(Tyr) + AMP + diphosphate + H(+)</text>
        <dbReference type="Rhea" id="RHEA:10220"/>
        <dbReference type="Rhea" id="RHEA-COMP:9706"/>
        <dbReference type="Rhea" id="RHEA-COMP:9707"/>
        <dbReference type="ChEBI" id="CHEBI:15378"/>
        <dbReference type="ChEBI" id="CHEBI:30616"/>
        <dbReference type="ChEBI" id="CHEBI:33019"/>
        <dbReference type="ChEBI" id="CHEBI:58315"/>
        <dbReference type="ChEBI" id="CHEBI:78442"/>
        <dbReference type="ChEBI" id="CHEBI:78536"/>
        <dbReference type="ChEBI" id="CHEBI:456215"/>
        <dbReference type="EC" id="6.1.1.1"/>
    </reaction>
</comment>
<comment type="subunit">
    <text evidence="1">Homodimer.</text>
</comment>
<comment type="subcellular location">
    <subcellularLocation>
        <location evidence="1">Cytoplasm</location>
    </subcellularLocation>
</comment>
<comment type="similarity">
    <text evidence="1">Belongs to the class-I aminoacyl-tRNA synthetase family. TyrS type 2 subfamily.</text>
</comment>
<name>SYY_IDILO</name>